<comment type="function">
    <text evidence="1">Catalyzes the conversion of dethiobiotin (DTB) to biotin by the insertion of a sulfur atom into dethiobiotin via a radical-based mechanism.</text>
</comment>
<comment type="catalytic activity">
    <reaction evidence="1">
        <text>(4R,5S)-dethiobiotin + (sulfur carrier)-SH + 2 reduced [2Fe-2S]-[ferredoxin] + 2 S-adenosyl-L-methionine = (sulfur carrier)-H + biotin + 2 5'-deoxyadenosine + 2 L-methionine + 2 oxidized [2Fe-2S]-[ferredoxin]</text>
        <dbReference type="Rhea" id="RHEA:22060"/>
        <dbReference type="Rhea" id="RHEA-COMP:10000"/>
        <dbReference type="Rhea" id="RHEA-COMP:10001"/>
        <dbReference type="Rhea" id="RHEA-COMP:14737"/>
        <dbReference type="Rhea" id="RHEA-COMP:14739"/>
        <dbReference type="ChEBI" id="CHEBI:17319"/>
        <dbReference type="ChEBI" id="CHEBI:29917"/>
        <dbReference type="ChEBI" id="CHEBI:33737"/>
        <dbReference type="ChEBI" id="CHEBI:33738"/>
        <dbReference type="ChEBI" id="CHEBI:57586"/>
        <dbReference type="ChEBI" id="CHEBI:57844"/>
        <dbReference type="ChEBI" id="CHEBI:59789"/>
        <dbReference type="ChEBI" id="CHEBI:64428"/>
        <dbReference type="ChEBI" id="CHEBI:149473"/>
        <dbReference type="EC" id="2.8.1.6"/>
    </reaction>
</comment>
<comment type="cofactor">
    <cofactor evidence="1">
        <name>[4Fe-4S] cluster</name>
        <dbReference type="ChEBI" id="CHEBI:49883"/>
    </cofactor>
    <text evidence="1">Binds 1 [4Fe-4S] cluster. The cluster is coordinated with 3 cysteines and an exchangeable S-adenosyl-L-methionine.</text>
</comment>
<comment type="cofactor">
    <cofactor evidence="1">
        <name>[2Fe-2S] cluster</name>
        <dbReference type="ChEBI" id="CHEBI:190135"/>
    </cofactor>
    <text evidence="1">Binds 1 [2Fe-2S] cluster. The cluster is coordinated with 3 cysteines and 1 arginine.</text>
</comment>
<comment type="pathway">
    <text evidence="1">Cofactor biosynthesis; biotin biosynthesis; biotin from 7,8-diaminononanoate: step 2/2.</text>
</comment>
<comment type="subunit">
    <text evidence="1">Homodimer.</text>
</comment>
<comment type="similarity">
    <text evidence="1">Belongs to the radical SAM superfamily. Biotin synthase family.</text>
</comment>
<name>BIOB_MYCA1</name>
<evidence type="ECO:0000255" key="1">
    <source>
        <dbReference type="HAMAP-Rule" id="MF_01694"/>
    </source>
</evidence>
<evidence type="ECO:0000255" key="2">
    <source>
        <dbReference type="PROSITE-ProRule" id="PRU01266"/>
    </source>
</evidence>
<accession>A0QHJ1</accession>
<organism>
    <name type="scientific">Mycobacterium avium (strain 104)</name>
    <dbReference type="NCBI Taxonomy" id="243243"/>
    <lineage>
        <taxon>Bacteria</taxon>
        <taxon>Bacillati</taxon>
        <taxon>Actinomycetota</taxon>
        <taxon>Actinomycetes</taxon>
        <taxon>Mycobacteriales</taxon>
        <taxon>Mycobacteriaceae</taxon>
        <taxon>Mycobacterium</taxon>
        <taxon>Mycobacterium avium complex (MAC)</taxon>
    </lineage>
</organism>
<dbReference type="EC" id="2.8.1.6" evidence="1"/>
<dbReference type="EMBL" id="CP000479">
    <property type="protein sequence ID" value="ABK65626.1"/>
    <property type="molecule type" value="Genomic_DNA"/>
</dbReference>
<dbReference type="RefSeq" id="WP_009977401.1">
    <property type="nucleotide sequence ID" value="NC_008595.1"/>
</dbReference>
<dbReference type="SMR" id="A0QHJ1"/>
<dbReference type="KEGG" id="mav:MAV_3196"/>
<dbReference type="HOGENOM" id="CLU_033172_2_1_11"/>
<dbReference type="UniPathway" id="UPA00078">
    <property type="reaction ID" value="UER00162"/>
</dbReference>
<dbReference type="Proteomes" id="UP000001574">
    <property type="component" value="Chromosome"/>
</dbReference>
<dbReference type="GO" id="GO:0051537">
    <property type="term" value="F:2 iron, 2 sulfur cluster binding"/>
    <property type="evidence" value="ECO:0007669"/>
    <property type="project" value="UniProtKB-KW"/>
</dbReference>
<dbReference type="GO" id="GO:0051539">
    <property type="term" value="F:4 iron, 4 sulfur cluster binding"/>
    <property type="evidence" value="ECO:0007669"/>
    <property type="project" value="UniProtKB-KW"/>
</dbReference>
<dbReference type="GO" id="GO:0004076">
    <property type="term" value="F:biotin synthase activity"/>
    <property type="evidence" value="ECO:0007669"/>
    <property type="project" value="UniProtKB-UniRule"/>
</dbReference>
<dbReference type="GO" id="GO:0005506">
    <property type="term" value="F:iron ion binding"/>
    <property type="evidence" value="ECO:0007669"/>
    <property type="project" value="UniProtKB-UniRule"/>
</dbReference>
<dbReference type="GO" id="GO:0009102">
    <property type="term" value="P:biotin biosynthetic process"/>
    <property type="evidence" value="ECO:0007669"/>
    <property type="project" value="UniProtKB-UniRule"/>
</dbReference>
<dbReference type="CDD" id="cd01335">
    <property type="entry name" value="Radical_SAM"/>
    <property type="match status" value="1"/>
</dbReference>
<dbReference type="FunFam" id="3.20.20.70:FF:000026">
    <property type="entry name" value="Biotin synthase"/>
    <property type="match status" value="1"/>
</dbReference>
<dbReference type="Gene3D" id="3.20.20.70">
    <property type="entry name" value="Aldolase class I"/>
    <property type="match status" value="1"/>
</dbReference>
<dbReference type="HAMAP" id="MF_01694">
    <property type="entry name" value="BioB"/>
    <property type="match status" value="1"/>
</dbReference>
<dbReference type="InterPro" id="IPR013785">
    <property type="entry name" value="Aldolase_TIM"/>
</dbReference>
<dbReference type="InterPro" id="IPR010722">
    <property type="entry name" value="BATS_dom"/>
</dbReference>
<dbReference type="InterPro" id="IPR002684">
    <property type="entry name" value="Biotin_synth/BioAB"/>
</dbReference>
<dbReference type="InterPro" id="IPR024177">
    <property type="entry name" value="Biotin_synthase"/>
</dbReference>
<dbReference type="InterPro" id="IPR006638">
    <property type="entry name" value="Elp3/MiaA/NifB-like_rSAM"/>
</dbReference>
<dbReference type="InterPro" id="IPR007197">
    <property type="entry name" value="rSAM"/>
</dbReference>
<dbReference type="NCBIfam" id="TIGR00433">
    <property type="entry name" value="bioB"/>
    <property type="match status" value="1"/>
</dbReference>
<dbReference type="PANTHER" id="PTHR22976">
    <property type="entry name" value="BIOTIN SYNTHASE"/>
    <property type="match status" value="1"/>
</dbReference>
<dbReference type="PANTHER" id="PTHR22976:SF2">
    <property type="entry name" value="BIOTIN SYNTHASE, MITOCHONDRIAL"/>
    <property type="match status" value="1"/>
</dbReference>
<dbReference type="Pfam" id="PF06968">
    <property type="entry name" value="BATS"/>
    <property type="match status" value="1"/>
</dbReference>
<dbReference type="Pfam" id="PF04055">
    <property type="entry name" value="Radical_SAM"/>
    <property type="match status" value="1"/>
</dbReference>
<dbReference type="PIRSF" id="PIRSF001619">
    <property type="entry name" value="Biotin_synth"/>
    <property type="match status" value="1"/>
</dbReference>
<dbReference type="SFLD" id="SFLDG01278">
    <property type="entry name" value="biotin_synthase_like"/>
    <property type="match status" value="1"/>
</dbReference>
<dbReference type="SFLD" id="SFLDS00029">
    <property type="entry name" value="Radical_SAM"/>
    <property type="match status" value="1"/>
</dbReference>
<dbReference type="SMART" id="SM00876">
    <property type="entry name" value="BATS"/>
    <property type="match status" value="1"/>
</dbReference>
<dbReference type="SMART" id="SM00729">
    <property type="entry name" value="Elp3"/>
    <property type="match status" value="1"/>
</dbReference>
<dbReference type="SUPFAM" id="SSF102114">
    <property type="entry name" value="Radical SAM enzymes"/>
    <property type="match status" value="1"/>
</dbReference>
<dbReference type="PROSITE" id="PS51918">
    <property type="entry name" value="RADICAL_SAM"/>
    <property type="match status" value="1"/>
</dbReference>
<keyword id="KW-0001">2Fe-2S</keyword>
<keyword id="KW-0004">4Fe-4S</keyword>
<keyword id="KW-0093">Biotin biosynthesis</keyword>
<keyword id="KW-0408">Iron</keyword>
<keyword id="KW-0411">Iron-sulfur</keyword>
<keyword id="KW-0479">Metal-binding</keyword>
<keyword id="KW-0949">S-adenosyl-L-methionine</keyword>
<keyword id="KW-0808">Transferase</keyword>
<gene>
    <name evidence="1" type="primary">bioB</name>
    <name type="ordered locus">MAV_3196</name>
</gene>
<sequence>MTQAATRPTAETGNDEDILAVARRQVLEGGQGLSRDQVLQVLRLPDDRLDDLLALAHEVRMRWCGPEVEVEGIISLKTGGCPEDCHFCSQSGLFASPVRSARLDIPSLVEAAKQTAKSGATEFCIVAAVRGPDERLLAQVAAGIEAIRNEVEINIACSLGMLTAEQVEQLAEMGVHRYNHNLETARSFFPNVVTTHTWEERWDTLSMVRDAGMEVCCGGILGMGETLEQRAEFAAELAELGPDEVPLNFLNPRPGTPFGDLEVMPATEALKSVAAFRLALPRTMLRFAGGREITLGDLGAKKGILGGINAVIVGNYLTTLGRPAESDLELLDDLQMPLKGLNASL</sequence>
<proteinExistence type="inferred from homology"/>
<reference key="1">
    <citation type="submission" date="2006-10" db="EMBL/GenBank/DDBJ databases">
        <authorList>
            <person name="Fleischmann R.D."/>
            <person name="Dodson R.J."/>
            <person name="Haft D.H."/>
            <person name="Merkel J.S."/>
            <person name="Nelson W.C."/>
            <person name="Fraser C.M."/>
        </authorList>
    </citation>
    <scope>NUCLEOTIDE SEQUENCE [LARGE SCALE GENOMIC DNA]</scope>
    <source>
        <strain>104</strain>
    </source>
</reference>
<protein>
    <recommendedName>
        <fullName evidence="1">Biotin synthase</fullName>
        <ecNumber evidence="1">2.8.1.6</ecNumber>
    </recommendedName>
</protein>
<feature type="chain" id="PRO_0000381475" description="Biotin synthase">
    <location>
        <begin position="1"/>
        <end position="345"/>
    </location>
</feature>
<feature type="domain" description="Radical SAM core" evidence="2">
    <location>
        <begin position="66"/>
        <end position="291"/>
    </location>
</feature>
<feature type="binding site" evidence="1">
    <location>
        <position position="81"/>
    </location>
    <ligand>
        <name>[4Fe-4S] cluster</name>
        <dbReference type="ChEBI" id="CHEBI:49883"/>
        <note>4Fe-4S-S-AdoMet</note>
    </ligand>
</feature>
<feature type="binding site" evidence="1">
    <location>
        <position position="85"/>
    </location>
    <ligand>
        <name>[4Fe-4S] cluster</name>
        <dbReference type="ChEBI" id="CHEBI:49883"/>
        <note>4Fe-4S-S-AdoMet</note>
    </ligand>
</feature>
<feature type="binding site" evidence="1">
    <location>
        <position position="88"/>
    </location>
    <ligand>
        <name>[4Fe-4S] cluster</name>
        <dbReference type="ChEBI" id="CHEBI:49883"/>
        <note>4Fe-4S-S-AdoMet</note>
    </ligand>
</feature>
<feature type="binding site" evidence="1">
    <location>
        <position position="124"/>
    </location>
    <ligand>
        <name>[2Fe-2S] cluster</name>
        <dbReference type="ChEBI" id="CHEBI:190135"/>
    </ligand>
</feature>
<feature type="binding site" evidence="1">
    <location>
        <position position="157"/>
    </location>
    <ligand>
        <name>[2Fe-2S] cluster</name>
        <dbReference type="ChEBI" id="CHEBI:190135"/>
    </ligand>
</feature>
<feature type="binding site" evidence="1">
    <location>
        <position position="216"/>
    </location>
    <ligand>
        <name>[2Fe-2S] cluster</name>
        <dbReference type="ChEBI" id="CHEBI:190135"/>
    </ligand>
</feature>
<feature type="binding site" evidence="1">
    <location>
        <position position="286"/>
    </location>
    <ligand>
        <name>[2Fe-2S] cluster</name>
        <dbReference type="ChEBI" id="CHEBI:190135"/>
    </ligand>
</feature>